<feature type="chain" id="PRO_0000220660" description="Phosphatidylcholine transfer protein">
    <location>
        <begin position="1"/>
        <end position="214"/>
    </location>
</feature>
<feature type="domain" description="START" evidence="4">
    <location>
        <begin position="1"/>
        <end position="212"/>
    </location>
</feature>
<feature type="binding site" evidence="1">
    <location>
        <position position="72"/>
    </location>
    <ligand>
        <name>a 1,2-diacyl-sn-glycero-3-phosphocholine</name>
        <dbReference type="ChEBI" id="CHEBI:57643"/>
    </ligand>
</feature>
<feature type="binding site" evidence="1">
    <location>
        <position position="78"/>
    </location>
    <ligand>
        <name>a 1,2-diacyl-sn-glycero-3-phosphocholine</name>
        <dbReference type="ChEBI" id="CHEBI:57643"/>
    </ligand>
</feature>
<feature type="binding site" evidence="1">
    <location>
        <position position="157"/>
    </location>
    <ligand>
        <name>a 1,2-diacyl-sn-glycero-3-phosphocholine</name>
        <dbReference type="ChEBI" id="CHEBI:57643"/>
    </ligand>
</feature>
<feature type="modified residue" description="N-acetylmethionine" evidence="2">
    <location>
        <position position="1"/>
    </location>
</feature>
<feature type="modified residue" description="Phosphoserine" evidence="3">
    <location>
        <position position="139"/>
    </location>
</feature>
<feature type="sequence conflict" description="In Ref. 3; CAA90329." evidence="5" ref="3">
    <original>E</original>
    <variation>Q</variation>
    <location>
        <position position="102"/>
    </location>
</feature>
<evidence type="ECO:0000250" key="1"/>
<evidence type="ECO:0000250" key="2">
    <source>
        <dbReference type="UniProtKB" id="P02720"/>
    </source>
</evidence>
<evidence type="ECO:0000250" key="3">
    <source>
        <dbReference type="UniProtKB" id="Q9UKL6"/>
    </source>
</evidence>
<evidence type="ECO:0000255" key="4">
    <source>
        <dbReference type="PROSITE-ProRule" id="PRU00197"/>
    </source>
</evidence>
<evidence type="ECO:0000305" key="5"/>
<proteinExistence type="evidence at transcript level"/>
<reference key="1">
    <citation type="journal article" date="1999" name="Gene">
        <title>Cloning and gene structure of rat phosphatidylcholine transfer protein, Pctp.</title>
        <authorList>
            <person name="Wu M.K."/>
            <person name="Boylan M.O."/>
            <person name="Cohen D.E."/>
        </authorList>
    </citation>
    <scope>NUCLEOTIDE SEQUENCE [GENOMIC DNA / MRNA]</scope>
    <source>
        <strain>Sprague-Dawley</strain>
        <tissue>Liver</tissue>
    </source>
</reference>
<reference key="2">
    <citation type="journal article" date="2004" name="Genome Res.">
        <title>The status, quality, and expansion of the NIH full-length cDNA project: the Mammalian Gene Collection (MGC).</title>
        <authorList>
            <consortium name="The MGC Project Team"/>
        </authorList>
    </citation>
    <scope>NUCLEOTIDE SEQUENCE [LARGE SCALE MRNA]</scope>
    <source>
        <tissue>Testis</tissue>
    </source>
</reference>
<reference key="3">
    <citation type="journal article" date="1996" name="Biochem. J.">
        <title>cDNA cloning and tissue-specific expression of the phosphatidylcholine transfer protein gene.</title>
        <authorList>
            <person name="Geijtenbeek T.B.H."/>
            <person name="Smith A.J."/>
            <person name="Borst P."/>
            <person name="Wirtz K.W.A."/>
        </authorList>
    </citation>
    <scope>NUCLEOTIDE SEQUENCE [MRNA] OF 100-179</scope>
    <source>
        <tissue>Liver</tissue>
    </source>
</reference>
<accession>P53809</accession>
<accession>Q9Z2N9</accession>
<gene>
    <name type="primary">Pctp</name>
    <name type="synonym">Stard2</name>
</gene>
<sequence>MAGPAAHFSDEQFREACAELQKPALTGADWQLLVEASGITIYRLLDQSTGLYEYKVFGVLESCIPSLLADVYMDLDYRKKWDQYVKELYEKSFDGQMVAYWEVKYPFPLSNRDYVYTRQRRDLDVDGRKIYVVLAQNISVPQFPEKSGVIRVKQYKQSLAIESDGKKGSRVFMYYFDNPGGQIPSWLINWAAKNGVPSFLKDMVKACQNYHKKT</sequence>
<protein>
    <recommendedName>
        <fullName>Phosphatidylcholine transfer protein</fullName>
        <shortName>PC-TP</shortName>
    </recommendedName>
    <alternativeName>
        <fullName>START domain-containing protein 2</fullName>
        <shortName>StARD2</shortName>
    </alternativeName>
    <alternativeName>
        <fullName>StAR-related lipid transfer protein 2</fullName>
    </alternativeName>
</protein>
<keyword id="KW-0007">Acetylation</keyword>
<keyword id="KW-0963">Cytoplasm</keyword>
<keyword id="KW-0445">Lipid transport</keyword>
<keyword id="KW-0446">Lipid-binding</keyword>
<keyword id="KW-0597">Phosphoprotein</keyword>
<keyword id="KW-1185">Reference proteome</keyword>
<keyword id="KW-0813">Transport</keyword>
<comment type="function">
    <text>Lipid transfer protein that promotes intermembrane transfer of phosphatidylcholines but no other phospholipids. Binds a single lipid molecule. May play a role in hepatocellular selection and transport of phosphatidylcholines during bile formation.</text>
</comment>
<comment type="subunit">
    <text evidence="1">Interacts with ACOT13/THEM2.</text>
</comment>
<comment type="subcellular location">
    <subcellularLocation>
        <location>Cytoplasm</location>
    </subcellularLocation>
</comment>
<organism>
    <name type="scientific">Rattus norvegicus</name>
    <name type="common">Rat</name>
    <dbReference type="NCBI Taxonomy" id="10116"/>
    <lineage>
        <taxon>Eukaryota</taxon>
        <taxon>Metazoa</taxon>
        <taxon>Chordata</taxon>
        <taxon>Craniata</taxon>
        <taxon>Vertebrata</taxon>
        <taxon>Euteleostomi</taxon>
        <taxon>Mammalia</taxon>
        <taxon>Eutheria</taxon>
        <taxon>Euarchontoglires</taxon>
        <taxon>Glires</taxon>
        <taxon>Rodentia</taxon>
        <taxon>Myomorpha</taxon>
        <taxon>Muroidea</taxon>
        <taxon>Muridae</taxon>
        <taxon>Murinae</taxon>
        <taxon>Rattus</taxon>
    </lineage>
</organism>
<dbReference type="EMBL" id="AF040267">
    <property type="protein sequence ID" value="AAC98930.1"/>
    <property type="molecule type" value="Genomic_DNA"/>
</dbReference>
<dbReference type="EMBL" id="AF040262">
    <property type="protein sequence ID" value="AAC98930.1"/>
    <property type="status" value="JOINED"/>
    <property type="molecule type" value="Genomic_DNA"/>
</dbReference>
<dbReference type="EMBL" id="AF040263">
    <property type="protein sequence ID" value="AAC98930.1"/>
    <property type="status" value="JOINED"/>
    <property type="molecule type" value="Genomic_DNA"/>
</dbReference>
<dbReference type="EMBL" id="AF040264">
    <property type="protein sequence ID" value="AAC98930.1"/>
    <property type="status" value="JOINED"/>
    <property type="molecule type" value="Genomic_DNA"/>
</dbReference>
<dbReference type="EMBL" id="AF040265">
    <property type="protein sequence ID" value="AAC98930.1"/>
    <property type="status" value="JOINED"/>
    <property type="molecule type" value="Genomic_DNA"/>
</dbReference>
<dbReference type="EMBL" id="AF040266">
    <property type="protein sequence ID" value="AAC98930.1"/>
    <property type="status" value="JOINED"/>
    <property type="molecule type" value="Genomic_DNA"/>
</dbReference>
<dbReference type="EMBL" id="AF040261">
    <property type="protein sequence ID" value="AAC98929.1"/>
    <property type="molecule type" value="mRNA"/>
</dbReference>
<dbReference type="EMBL" id="BC078854">
    <property type="protein sequence ID" value="AAH78854.1"/>
    <property type="molecule type" value="mRNA"/>
</dbReference>
<dbReference type="EMBL" id="Z50025">
    <property type="protein sequence ID" value="CAA90329.1"/>
    <property type="molecule type" value="mRNA"/>
</dbReference>
<dbReference type="RefSeq" id="NP_058921.1">
    <property type="nucleotide sequence ID" value="NM_017225.3"/>
</dbReference>
<dbReference type="SMR" id="P53809"/>
<dbReference type="FunCoup" id="P53809">
    <property type="interactions" value="13"/>
</dbReference>
<dbReference type="STRING" id="10116.ENSRNOP00000003295"/>
<dbReference type="PhosphoSitePlus" id="P53809"/>
<dbReference type="PaxDb" id="10116-ENSRNOP00000003295"/>
<dbReference type="Ensembl" id="ENSRNOT00000003295.5">
    <property type="protein sequence ID" value="ENSRNOP00000003295.1"/>
    <property type="gene ID" value="ENSRNOG00000002425.5"/>
</dbReference>
<dbReference type="GeneID" id="29510"/>
<dbReference type="KEGG" id="rno:29510"/>
<dbReference type="AGR" id="RGD:3276"/>
<dbReference type="CTD" id="58488"/>
<dbReference type="RGD" id="3276">
    <property type="gene designation" value="Pctp"/>
</dbReference>
<dbReference type="eggNOG" id="KOG2761">
    <property type="taxonomic scope" value="Eukaryota"/>
</dbReference>
<dbReference type="GeneTree" id="ENSGT00940000156843"/>
<dbReference type="HOGENOM" id="CLU_042209_1_0_1"/>
<dbReference type="InParanoid" id="P53809"/>
<dbReference type="OMA" id="DYVYMRE"/>
<dbReference type="OrthoDB" id="1295045at2759"/>
<dbReference type="PhylomeDB" id="P53809"/>
<dbReference type="TreeFam" id="TF320705"/>
<dbReference type="Reactome" id="R-RNO-1483191">
    <property type="pathway name" value="Synthesis of PC"/>
</dbReference>
<dbReference type="Reactome" id="R-RNO-77289">
    <property type="pathway name" value="Mitochondrial Fatty Acid Beta-Oxidation"/>
</dbReference>
<dbReference type="PRO" id="PR:P53809"/>
<dbReference type="Proteomes" id="UP000002494">
    <property type="component" value="Chromosome 10"/>
</dbReference>
<dbReference type="Bgee" id="ENSRNOG00000002425">
    <property type="expression patterns" value="Expressed in liver and 19 other cell types or tissues"/>
</dbReference>
<dbReference type="GO" id="GO:0005829">
    <property type="term" value="C:cytosol"/>
    <property type="evidence" value="ECO:0000266"/>
    <property type="project" value="RGD"/>
</dbReference>
<dbReference type="GO" id="GO:0031210">
    <property type="term" value="F:phosphatidylcholine binding"/>
    <property type="evidence" value="ECO:0000250"/>
    <property type="project" value="UniProtKB"/>
</dbReference>
<dbReference type="GO" id="GO:0008525">
    <property type="term" value="F:phosphatidylcholine transporter activity"/>
    <property type="evidence" value="ECO:0000250"/>
    <property type="project" value="UniProtKB"/>
</dbReference>
<dbReference type="GO" id="GO:0008203">
    <property type="term" value="P:cholesterol metabolic process"/>
    <property type="evidence" value="ECO:0000266"/>
    <property type="project" value="RGD"/>
</dbReference>
<dbReference type="GO" id="GO:0120163">
    <property type="term" value="P:negative regulation of cold-induced thermogenesis"/>
    <property type="evidence" value="ECO:0000250"/>
    <property type="project" value="YuBioLab"/>
</dbReference>
<dbReference type="GO" id="GO:0015914">
    <property type="term" value="P:phospholipid transport"/>
    <property type="evidence" value="ECO:0000250"/>
    <property type="project" value="UniProtKB"/>
</dbReference>
<dbReference type="CDD" id="cd08910">
    <property type="entry name" value="START_STARD2-like"/>
    <property type="match status" value="1"/>
</dbReference>
<dbReference type="FunFam" id="3.30.530.20:FF:000017">
    <property type="entry name" value="Phosphatidylcholine transfer protein, putative"/>
    <property type="match status" value="1"/>
</dbReference>
<dbReference type="Gene3D" id="3.30.530.20">
    <property type="match status" value="1"/>
</dbReference>
<dbReference type="InterPro" id="IPR041950">
    <property type="entry name" value="STARD2_START"/>
</dbReference>
<dbReference type="InterPro" id="IPR023393">
    <property type="entry name" value="START-like_dom_sf"/>
</dbReference>
<dbReference type="InterPro" id="IPR002913">
    <property type="entry name" value="START_lipid-bd_dom"/>
</dbReference>
<dbReference type="InterPro" id="IPR051213">
    <property type="entry name" value="START_lipid_transfer"/>
</dbReference>
<dbReference type="PANTHER" id="PTHR19308">
    <property type="entry name" value="PHOSPHATIDYLCHOLINE TRANSFER PROTEIN"/>
    <property type="match status" value="1"/>
</dbReference>
<dbReference type="PANTHER" id="PTHR19308:SF39">
    <property type="entry name" value="PHOSPHATIDYLCHOLINE TRANSFER PROTEIN"/>
    <property type="match status" value="1"/>
</dbReference>
<dbReference type="Pfam" id="PF01852">
    <property type="entry name" value="START"/>
    <property type="match status" value="1"/>
</dbReference>
<dbReference type="SMART" id="SM00234">
    <property type="entry name" value="START"/>
    <property type="match status" value="1"/>
</dbReference>
<dbReference type="SUPFAM" id="SSF55961">
    <property type="entry name" value="Bet v1-like"/>
    <property type="match status" value="1"/>
</dbReference>
<dbReference type="PROSITE" id="PS50848">
    <property type="entry name" value="START"/>
    <property type="match status" value="1"/>
</dbReference>
<name>PPCT_RAT</name>